<protein>
    <recommendedName>
        <fullName evidence="1">Diaminopimelate epimerase</fullName>
        <shortName evidence="1">DAP epimerase</shortName>
        <ecNumber evidence="1">5.1.1.7</ecNumber>
    </recommendedName>
    <alternativeName>
        <fullName evidence="1">PLP-independent amino acid racemase</fullName>
    </alternativeName>
</protein>
<accession>Q65FD6</accession>
<accession>Q62QV0</accession>
<organism>
    <name type="scientific">Bacillus licheniformis (strain ATCC 14580 / DSM 13 / JCM 2505 / CCUG 7422 / NBRC 12200 / NCIMB 9375 / NCTC 10341 / NRRL NRS-1264 / Gibson 46)</name>
    <dbReference type="NCBI Taxonomy" id="279010"/>
    <lineage>
        <taxon>Bacteria</taxon>
        <taxon>Bacillati</taxon>
        <taxon>Bacillota</taxon>
        <taxon>Bacilli</taxon>
        <taxon>Bacillales</taxon>
        <taxon>Bacillaceae</taxon>
        <taxon>Bacillus</taxon>
    </lineage>
</organism>
<feature type="chain" id="PRO_1000011843" description="Diaminopimelate epimerase">
    <location>
        <begin position="1"/>
        <end position="285"/>
    </location>
</feature>
<feature type="active site" description="Proton donor" evidence="1">
    <location>
        <position position="76"/>
    </location>
</feature>
<feature type="active site" description="Proton acceptor" evidence="1">
    <location>
        <position position="226"/>
    </location>
</feature>
<feature type="binding site" evidence="1">
    <location>
        <position position="14"/>
    </location>
    <ligand>
        <name>substrate</name>
    </ligand>
</feature>
<feature type="binding site" evidence="1">
    <location>
        <position position="67"/>
    </location>
    <ligand>
        <name>substrate</name>
    </ligand>
</feature>
<feature type="binding site" evidence="1">
    <location>
        <begin position="77"/>
        <end position="78"/>
    </location>
    <ligand>
        <name>substrate</name>
    </ligand>
</feature>
<feature type="binding site" evidence="1">
    <location>
        <position position="166"/>
    </location>
    <ligand>
        <name>substrate</name>
    </ligand>
</feature>
<feature type="binding site" evidence="1">
    <location>
        <position position="199"/>
    </location>
    <ligand>
        <name>substrate</name>
    </ligand>
</feature>
<feature type="binding site" evidence="1">
    <location>
        <begin position="217"/>
        <end position="218"/>
    </location>
    <ligand>
        <name>substrate</name>
    </ligand>
</feature>
<feature type="binding site" evidence="1">
    <location>
        <begin position="227"/>
        <end position="228"/>
    </location>
    <ligand>
        <name>substrate</name>
    </ligand>
</feature>
<feature type="site" description="Could be important to modulate the pK values of the two catalytic cysteine residues" evidence="1">
    <location>
        <position position="168"/>
    </location>
</feature>
<feature type="site" description="Could be important to modulate the pK values of the two catalytic cysteine residues" evidence="1">
    <location>
        <position position="217"/>
    </location>
</feature>
<gene>
    <name evidence="1" type="primary">dapF</name>
    <name type="ordered locus">BLi03399</name>
    <name type="ordered locus">BL03150</name>
</gene>
<sequence>MNSFRFTKMHGLGNSYIYVNQFEEHLPEELLSDLAVKVSSVYTGIGSDGMILICPSDRAPVKMRIFNSDGSEGKNCGNGLRCVAKYAYEHKLVEETSFLIETLSGLVKAQVEVDEGKVVSATVDMGEPRLLKSDMPMRGEQGSETINEKMIFGGREMKGTAVSMGNPHIVFYLDDIEKAPLTTMGPLIEKDERFPEGVNVEFVEVENENELHFRVWERGSGITQACGTGACAAAVSSVLNGYSKRDTDITVHLAGGDLIINWKNDGRVMMTGPAETVCEGEFFIS</sequence>
<dbReference type="EC" id="5.1.1.7" evidence="1"/>
<dbReference type="EMBL" id="CP000002">
    <property type="protein sequence ID" value="AAU24860.1"/>
    <property type="molecule type" value="Genomic_DNA"/>
</dbReference>
<dbReference type="EMBL" id="AE017333">
    <property type="protein sequence ID" value="AAU42228.1"/>
    <property type="molecule type" value="Genomic_DNA"/>
</dbReference>
<dbReference type="RefSeq" id="WP_009329524.1">
    <property type="nucleotide sequence ID" value="NC_006322.1"/>
</dbReference>
<dbReference type="SMR" id="Q65FD6"/>
<dbReference type="STRING" id="279010.BL03150"/>
<dbReference type="GeneID" id="92860021"/>
<dbReference type="KEGG" id="bld:BLi03399"/>
<dbReference type="KEGG" id="bli:BL03150"/>
<dbReference type="eggNOG" id="COG0253">
    <property type="taxonomic scope" value="Bacteria"/>
</dbReference>
<dbReference type="HOGENOM" id="CLU_053306_3_0_9"/>
<dbReference type="UniPathway" id="UPA00034">
    <property type="reaction ID" value="UER00025"/>
</dbReference>
<dbReference type="Proteomes" id="UP000000606">
    <property type="component" value="Chromosome"/>
</dbReference>
<dbReference type="GO" id="GO:0005829">
    <property type="term" value="C:cytosol"/>
    <property type="evidence" value="ECO:0007669"/>
    <property type="project" value="TreeGrafter"/>
</dbReference>
<dbReference type="GO" id="GO:0008837">
    <property type="term" value="F:diaminopimelate epimerase activity"/>
    <property type="evidence" value="ECO:0007669"/>
    <property type="project" value="UniProtKB-UniRule"/>
</dbReference>
<dbReference type="GO" id="GO:0009089">
    <property type="term" value="P:lysine biosynthetic process via diaminopimelate"/>
    <property type="evidence" value="ECO:0007669"/>
    <property type="project" value="UniProtKB-UniRule"/>
</dbReference>
<dbReference type="FunFam" id="3.10.310.10:FF:000004">
    <property type="entry name" value="Diaminopimelate epimerase"/>
    <property type="match status" value="1"/>
</dbReference>
<dbReference type="FunFam" id="3.10.310.10:FF:000006">
    <property type="entry name" value="Diaminopimelate epimerase"/>
    <property type="match status" value="1"/>
</dbReference>
<dbReference type="Gene3D" id="3.10.310.10">
    <property type="entry name" value="Diaminopimelate Epimerase, Chain A, domain 1"/>
    <property type="match status" value="2"/>
</dbReference>
<dbReference type="HAMAP" id="MF_00197">
    <property type="entry name" value="DAP_epimerase"/>
    <property type="match status" value="1"/>
</dbReference>
<dbReference type="InterPro" id="IPR018510">
    <property type="entry name" value="DAP_epimerase_AS"/>
</dbReference>
<dbReference type="InterPro" id="IPR001653">
    <property type="entry name" value="DAP_epimerase_DapF"/>
</dbReference>
<dbReference type="NCBIfam" id="TIGR00652">
    <property type="entry name" value="DapF"/>
    <property type="match status" value="1"/>
</dbReference>
<dbReference type="PANTHER" id="PTHR31689:SF0">
    <property type="entry name" value="DIAMINOPIMELATE EPIMERASE"/>
    <property type="match status" value="1"/>
</dbReference>
<dbReference type="PANTHER" id="PTHR31689">
    <property type="entry name" value="DIAMINOPIMELATE EPIMERASE, CHLOROPLASTIC"/>
    <property type="match status" value="1"/>
</dbReference>
<dbReference type="Pfam" id="PF01678">
    <property type="entry name" value="DAP_epimerase"/>
    <property type="match status" value="2"/>
</dbReference>
<dbReference type="SUPFAM" id="SSF54506">
    <property type="entry name" value="Diaminopimelate epimerase-like"/>
    <property type="match status" value="1"/>
</dbReference>
<dbReference type="PROSITE" id="PS01326">
    <property type="entry name" value="DAP_EPIMERASE"/>
    <property type="match status" value="1"/>
</dbReference>
<comment type="function">
    <text evidence="1">Catalyzes the stereoinversion of LL-2,6-diaminopimelate (L,L-DAP) to meso-diaminopimelate (meso-DAP), a precursor of L-lysine and an essential component of the bacterial peptidoglycan.</text>
</comment>
<comment type="catalytic activity">
    <reaction evidence="1">
        <text>(2S,6S)-2,6-diaminopimelate = meso-2,6-diaminopimelate</text>
        <dbReference type="Rhea" id="RHEA:15393"/>
        <dbReference type="ChEBI" id="CHEBI:57609"/>
        <dbReference type="ChEBI" id="CHEBI:57791"/>
        <dbReference type="EC" id="5.1.1.7"/>
    </reaction>
</comment>
<comment type="pathway">
    <text evidence="1">Amino-acid biosynthesis; L-lysine biosynthesis via DAP pathway; DL-2,6-diaminopimelate from LL-2,6-diaminopimelate: step 1/1.</text>
</comment>
<comment type="subunit">
    <text evidence="1">Homodimer.</text>
</comment>
<comment type="subcellular location">
    <subcellularLocation>
        <location evidence="1">Cytoplasm</location>
    </subcellularLocation>
</comment>
<comment type="similarity">
    <text evidence="1">Belongs to the diaminopimelate epimerase family.</text>
</comment>
<reference key="1">
    <citation type="journal article" date="2004" name="J. Mol. Microbiol. Biotechnol.">
        <title>The complete genome sequence of Bacillus licheniformis DSM13, an organism with great industrial potential.</title>
        <authorList>
            <person name="Veith B."/>
            <person name="Herzberg C."/>
            <person name="Steckel S."/>
            <person name="Feesche J."/>
            <person name="Maurer K.H."/>
            <person name="Ehrenreich P."/>
            <person name="Baeumer S."/>
            <person name="Henne A."/>
            <person name="Liesegang H."/>
            <person name="Merkl R."/>
            <person name="Ehrenreich A."/>
            <person name="Gottschalk G."/>
        </authorList>
    </citation>
    <scope>NUCLEOTIDE SEQUENCE [LARGE SCALE GENOMIC DNA]</scope>
    <source>
        <strain>ATCC 14580 / DSM 13 / JCM 2505 / CCUG 7422 / NBRC 12200 / NCIMB 9375 / NCTC 10341 / NRRL NRS-1264 / Gibson 46</strain>
    </source>
</reference>
<reference key="2">
    <citation type="journal article" date="2004" name="Genome Biol.">
        <title>Complete genome sequence of the industrial bacterium Bacillus licheniformis and comparisons with closely related Bacillus species.</title>
        <authorList>
            <person name="Rey M.W."/>
            <person name="Ramaiya P."/>
            <person name="Nelson B.A."/>
            <person name="Brody-Karpin S.D."/>
            <person name="Zaretsky E.J."/>
            <person name="Tang M."/>
            <person name="Lopez de Leon A."/>
            <person name="Xiang H."/>
            <person name="Gusti V."/>
            <person name="Clausen I.G."/>
            <person name="Olsen P.B."/>
            <person name="Rasmussen M.D."/>
            <person name="Andersen J.T."/>
            <person name="Joergensen P.L."/>
            <person name="Larsen T.S."/>
            <person name="Sorokin A."/>
            <person name="Bolotin A."/>
            <person name="Lapidus A."/>
            <person name="Galleron N."/>
            <person name="Ehrlich S.D."/>
            <person name="Berka R.M."/>
        </authorList>
    </citation>
    <scope>NUCLEOTIDE SEQUENCE [LARGE SCALE GENOMIC DNA]</scope>
    <source>
        <strain>ATCC 14580 / DSM 13 / JCM 2505 / CCUG 7422 / NBRC 12200 / NCIMB 9375 / NCTC 10341 / NRRL NRS-1264 / Gibson 46</strain>
    </source>
</reference>
<keyword id="KW-0028">Amino-acid biosynthesis</keyword>
<keyword id="KW-0963">Cytoplasm</keyword>
<keyword id="KW-0413">Isomerase</keyword>
<keyword id="KW-0457">Lysine biosynthesis</keyword>
<keyword id="KW-1185">Reference proteome</keyword>
<name>DAPF_BACLD</name>
<evidence type="ECO:0000255" key="1">
    <source>
        <dbReference type="HAMAP-Rule" id="MF_00197"/>
    </source>
</evidence>
<proteinExistence type="inferred from homology"/>